<comment type="function">
    <text evidence="3 4 5 6">Acts as a component of the essential kinetochore-associated NDC80 complex, which is required for chromosome segregation in mitosis and meiosis and spindle checkpoint activity (PubMed:11402066, PubMed:14522947, PubMed:15371539). The ndc-80 complex synergistically enhances the affinity of the ska-1 complex for microtubules and may allow the ndc-80 complex to track depolymerizing microtubules (PubMed:23085020).</text>
</comment>
<comment type="subunit">
    <text evidence="4">Component of the NDC80 complex, which is composed of at least ndc-80 and him-10. The NDC80 complex interacts with knl-1.</text>
</comment>
<comment type="interaction">
    <interactant intactId="EBI-326288">
        <id>Q21952</id>
    </interactant>
    <interactant intactId="EBI-314429">
        <id>Q17635</id>
        <label>ndc-80</label>
    </interactant>
    <organismsDiffer>false</organismsDiffer>
    <experiments>6</experiments>
</comment>
<comment type="subcellular location">
    <subcellularLocation>
        <location>Nucleus</location>
    </subcellularLocation>
    <subcellularLocation>
        <location>Chromosome</location>
        <location>Centromere</location>
        <location>Kinetochore</location>
    </subcellularLocation>
    <text>Localizes to kinetochores.</text>
</comment>
<comment type="similarity">
    <text evidence="7">Belongs to the NUF2 family.</text>
</comment>
<name>NUF2_CAEEL</name>
<proteinExistence type="evidence at protein level"/>
<keyword id="KW-0131">Cell cycle</keyword>
<keyword id="KW-0132">Cell division</keyword>
<keyword id="KW-0137">Centromere</keyword>
<keyword id="KW-0158">Chromosome</keyword>
<keyword id="KW-0175">Coiled coil</keyword>
<keyword id="KW-0995">Kinetochore</keyword>
<keyword id="KW-0469">Meiosis</keyword>
<keyword id="KW-0498">Mitosis</keyword>
<keyword id="KW-0539">Nucleus</keyword>
<keyword id="KW-1185">Reference proteome</keyword>
<reference key="1">
    <citation type="journal article" date="1998" name="Science">
        <title>Genome sequence of the nematode C. elegans: a platform for investigating biology.</title>
        <authorList>
            <consortium name="The C. elegans sequencing consortium"/>
        </authorList>
    </citation>
    <scope>NUCLEOTIDE SEQUENCE [LARGE SCALE GENOMIC DNA]</scope>
    <source>
        <strain>Bristol N2</strain>
    </source>
</reference>
<reference key="2">
    <citation type="journal article" date="2001" name="J. Cell Biol.">
        <title>HIM-10 is required for kinetochore structure and function on Caenorhabditis elegans holocentric chromosomes.</title>
        <authorList>
            <person name="Howe M."/>
            <person name="McDonald K.L."/>
            <person name="Albertson D.G."/>
            <person name="Meyer B.J."/>
        </authorList>
    </citation>
    <scope>FUNCTION</scope>
    <scope>SUBCELLULAR LOCATION</scope>
    <scope>MUTAGENESIS OF PRO-109</scope>
</reference>
<reference key="3">
    <citation type="journal article" date="2003" name="Genes Dev.">
        <title>KNL-1 directs assembly of the microtubule-binding interface of the kinetochore in C. elegans.</title>
        <authorList>
            <person name="Desai A."/>
            <person name="Rybina S."/>
            <person name="Mueller-Reichert T."/>
            <person name="Shevchenko A."/>
            <person name="Shevchenko A."/>
            <person name="Hyman A."/>
            <person name="Oegema K."/>
        </authorList>
    </citation>
    <scope>FUNCTION</scope>
    <scope>IDENTIFICATION BY MASS SPECTROMETRY</scope>
    <scope>IDENTIFICATION IN A COMPLEX WITH NDC-80 AND KNL-1</scope>
    <scope>SUBCELLULAR LOCATION</scope>
</reference>
<reference key="4">
    <citation type="journal article" date="2004" name="Mol. Biol. Cell">
        <title>The Caenorhabditis elegans kinetochore reorganizes at prometaphase and in response to checkpoint stimuli.</title>
        <authorList>
            <person name="Stear J.H."/>
            <person name="Roth M.B."/>
        </authorList>
    </citation>
    <scope>FUNCTION</scope>
    <scope>SUBCELLULAR LOCATION</scope>
</reference>
<reference key="5">
    <citation type="journal article" date="2012" name="Dev. Cell">
        <title>The kinetochore-bound Ska1 complex tracks depolymerizing microtubules and binds to curved protofilaments.</title>
        <authorList>
            <person name="Schmidt J.C."/>
            <person name="Arthanari H."/>
            <person name="Boeszoermenyi A."/>
            <person name="Dashkevich N.M."/>
            <person name="Wilson-Kubalek E.M."/>
            <person name="Monnier N."/>
            <person name="Markus M."/>
            <person name="Oberer M."/>
            <person name="Milligan R.A."/>
            <person name="Bathe M."/>
            <person name="Wagner G."/>
            <person name="Grishchuk E.L."/>
            <person name="Cheeseman I.M."/>
        </authorList>
    </citation>
    <scope>FUNCTION</scope>
</reference>
<accession>Q21952</accession>
<protein>
    <recommendedName>
        <fullName>Kinetochore protein Nuf2 homolog</fullName>
        <shortName>CeNuf2</shortName>
    </recommendedName>
    <alternativeName>
        <fullName>Kinetochore protein him-10</fullName>
    </alternativeName>
    <alternativeName>
        <fullName>Protein high incidence of males 10</fullName>
    </alternativeName>
</protein>
<sequence>MSNVVLIVYDPRMISKYLGQKLHMGLVADDIIKPTAEIAQQIFANFVRLVLNVSESSLTTLPLSANCDYDPELHKKSIPIIILFQCMKAFIKDNSGNKLDLTMCDLVTPAKHEHRFRKLTSFLVDFLKLHELATPAFNEISEEFSDRKFEMEKIREELLEAEKKKNDLLAKQSIRKRHEHELINEQSNAKAELKNVVNEYTETRQINEELDKQKEEAILHIQALEKEMLTGKKTIEHLNEEVLTSPEQLKQEMEERKRHIEELRDCLESSKKGLQAKLEAREICINSEKNVPVIIEKIHQWTEVREVIIDLIDVESENLRKLKEMEEQLDFMMKEMETAQKRLVEQSETHEQLRIEHTQKSEERQRRIEEITEQIANLKTSQPDVSQEIAKKKQELLALKNAHSETISQITNSCQDAVAKFAKLNAMFKETQKVAFEKNTAAAREMERLKSSLTGRLLSDYTFGSSTIDAGENTENCDPQPNDSSFSVFK</sequence>
<evidence type="ECO:0000255" key="1"/>
<evidence type="ECO:0000256" key="2">
    <source>
        <dbReference type="SAM" id="MobiDB-lite"/>
    </source>
</evidence>
<evidence type="ECO:0000269" key="3">
    <source>
    </source>
</evidence>
<evidence type="ECO:0000269" key="4">
    <source>
    </source>
</evidence>
<evidence type="ECO:0000269" key="5">
    <source>
    </source>
</evidence>
<evidence type="ECO:0000269" key="6">
    <source>
    </source>
</evidence>
<evidence type="ECO:0000305" key="7"/>
<organism>
    <name type="scientific">Caenorhabditis elegans</name>
    <dbReference type="NCBI Taxonomy" id="6239"/>
    <lineage>
        <taxon>Eukaryota</taxon>
        <taxon>Metazoa</taxon>
        <taxon>Ecdysozoa</taxon>
        <taxon>Nematoda</taxon>
        <taxon>Chromadorea</taxon>
        <taxon>Rhabditida</taxon>
        <taxon>Rhabditina</taxon>
        <taxon>Rhabditomorpha</taxon>
        <taxon>Rhabditoidea</taxon>
        <taxon>Rhabditidae</taxon>
        <taxon>Peloderinae</taxon>
        <taxon>Caenorhabditis</taxon>
    </lineage>
</organism>
<dbReference type="EMBL" id="FO081686">
    <property type="protein sequence ID" value="CCD73315.1"/>
    <property type="molecule type" value="Genomic_DNA"/>
</dbReference>
<dbReference type="PIR" id="T16722">
    <property type="entry name" value="T16722"/>
</dbReference>
<dbReference type="RefSeq" id="NP_498253.1">
    <property type="nucleotide sequence ID" value="NM_065852.6"/>
</dbReference>
<dbReference type="SMR" id="Q21952"/>
<dbReference type="BioGRID" id="41037">
    <property type="interactions" value="22"/>
</dbReference>
<dbReference type="ComplexPortal" id="CPX-806">
    <property type="entry name" value="Ndc80 complex"/>
</dbReference>
<dbReference type="DIP" id="DIP-25404N"/>
<dbReference type="FunCoup" id="Q21952">
    <property type="interactions" value="1430"/>
</dbReference>
<dbReference type="IntAct" id="Q21952">
    <property type="interactions" value="9"/>
</dbReference>
<dbReference type="STRING" id="6239.R12B2.4.1"/>
<dbReference type="PaxDb" id="6239-R12B2.4"/>
<dbReference type="PeptideAtlas" id="Q21952"/>
<dbReference type="EnsemblMetazoa" id="R12B2.4.1">
    <property type="protein sequence ID" value="R12B2.4.1"/>
    <property type="gene ID" value="WBGene00001869"/>
</dbReference>
<dbReference type="GeneID" id="175813"/>
<dbReference type="KEGG" id="cel:CELE_R12B2.4"/>
<dbReference type="UCSC" id="R12B2.4">
    <property type="organism name" value="c. elegans"/>
</dbReference>
<dbReference type="AGR" id="WB:WBGene00001869"/>
<dbReference type="CTD" id="175813"/>
<dbReference type="WormBase" id="R12B2.4">
    <property type="protein sequence ID" value="CE01367"/>
    <property type="gene ID" value="WBGene00001869"/>
    <property type="gene designation" value="him-10"/>
</dbReference>
<dbReference type="eggNOG" id="ENOG502SZZC">
    <property type="taxonomic scope" value="Eukaryota"/>
</dbReference>
<dbReference type="HOGENOM" id="CLU_028990_0_0_1"/>
<dbReference type="InParanoid" id="Q21952"/>
<dbReference type="OMA" id="ARNICAN"/>
<dbReference type="OrthoDB" id="5801951at2759"/>
<dbReference type="PhylomeDB" id="Q21952"/>
<dbReference type="SignaLink" id="Q21952"/>
<dbReference type="PRO" id="PR:Q21952"/>
<dbReference type="Proteomes" id="UP000001940">
    <property type="component" value="Chromosome III"/>
</dbReference>
<dbReference type="Bgee" id="WBGene00001869">
    <property type="expression patterns" value="Expressed in germ line (C elegans) and 4 other cell types or tissues"/>
</dbReference>
<dbReference type="GO" id="GO:0000776">
    <property type="term" value="C:kinetochore"/>
    <property type="evidence" value="ECO:0000314"/>
    <property type="project" value="WormBase"/>
</dbReference>
<dbReference type="GO" id="GO:0005874">
    <property type="term" value="C:microtubule"/>
    <property type="evidence" value="ECO:0000314"/>
    <property type="project" value="ComplexPortal"/>
</dbReference>
<dbReference type="GO" id="GO:0031262">
    <property type="term" value="C:Ndc80 complex"/>
    <property type="evidence" value="ECO:0000314"/>
    <property type="project" value="WormBase"/>
</dbReference>
<dbReference type="GO" id="GO:0005634">
    <property type="term" value="C:nucleus"/>
    <property type="evidence" value="ECO:0007669"/>
    <property type="project" value="UniProtKB-SubCell"/>
</dbReference>
<dbReference type="GO" id="GO:0008017">
    <property type="term" value="F:microtubule binding"/>
    <property type="evidence" value="ECO:0000250"/>
    <property type="project" value="UniProtKB"/>
</dbReference>
<dbReference type="GO" id="GO:0044877">
    <property type="term" value="F:protein-containing complex binding"/>
    <property type="evidence" value="ECO:0000353"/>
    <property type="project" value="UniProtKB"/>
</dbReference>
<dbReference type="GO" id="GO:0005198">
    <property type="term" value="F:structural molecule activity"/>
    <property type="evidence" value="ECO:0000250"/>
    <property type="project" value="WormBase"/>
</dbReference>
<dbReference type="GO" id="GO:0051315">
    <property type="term" value="P:attachment of mitotic spindle microtubules to kinetochore"/>
    <property type="evidence" value="ECO:0000318"/>
    <property type="project" value="GO_Central"/>
</dbReference>
<dbReference type="GO" id="GO:0008608">
    <property type="term" value="P:attachment of spindle microtubules to kinetochore"/>
    <property type="evidence" value="ECO:0000314"/>
    <property type="project" value="ComplexPortal"/>
</dbReference>
<dbReference type="GO" id="GO:0051301">
    <property type="term" value="P:cell division"/>
    <property type="evidence" value="ECO:0007669"/>
    <property type="project" value="UniProtKB-KW"/>
</dbReference>
<dbReference type="GO" id="GO:0051383">
    <property type="term" value="P:kinetochore organization"/>
    <property type="evidence" value="ECO:0000315"/>
    <property type="project" value="WormBase"/>
</dbReference>
<dbReference type="GO" id="GO:0045132">
    <property type="term" value="P:meiotic chromosome segregation"/>
    <property type="evidence" value="ECO:0000315"/>
    <property type="project" value="WormBase"/>
</dbReference>
<dbReference type="GO" id="GO:0000070">
    <property type="term" value="P:mitotic sister chromatid segregation"/>
    <property type="evidence" value="ECO:0000315"/>
    <property type="project" value="WormBase"/>
</dbReference>
<dbReference type="GO" id="GO:0007052">
    <property type="term" value="P:mitotic spindle organization"/>
    <property type="evidence" value="ECO:0000315"/>
    <property type="project" value="WormBase"/>
</dbReference>
<dbReference type="GO" id="GO:0022414">
    <property type="term" value="P:reproductive process"/>
    <property type="evidence" value="ECO:0000315"/>
    <property type="project" value="WormBase"/>
</dbReference>
<dbReference type="Gene3D" id="1.10.418.60">
    <property type="entry name" value="Ncd80 complex, Nuf2 subunit"/>
    <property type="match status" value="1"/>
</dbReference>
<dbReference type="InterPro" id="IPR005549">
    <property type="entry name" value="Kinetochore_Nuf2_N"/>
</dbReference>
<dbReference type="InterPro" id="IPR038275">
    <property type="entry name" value="Nuf2_N_sf"/>
</dbReference>
<dbReference type="PANTHER" id="PTHR21650:SF2">
    <property type="entry name" value="KINETOCHORE PROTEIN NUF2"/>
    <property type="match status" value="1"/>
</dbReference>
<dbReference type="PANTHER" id="PTHR21650">
    <property type="entry name" value="MEMBRALIN/KINETOCHORE PROTEIN NUF2"/>
    <property type="match status" value="1"/>
</dbReference>
<dbReference type="Pfam" id="PF03800">
    <property type="entry name" value="Nuf2"/>
    <property type="match status" value="1"/>
</dbReference>
<gene>
    <name type="primary">him-10</name>
    <name type="ORF">R12B2.4</name>
</gene>
<feature type="chain" id="PRO_0000249820" description="Kinetochore protein Nuf2 homolog">
    <location>
        <begin position="1"/>
        <end position="490"/>
    </location>
</feature>
<feature type="region of interest" description="Disordered" evidence="2">
    <location>
        <begin position="346"/>
        <end position="365"/>
    </location>
</feature>
<feature type="region of interest" description="Disordered" evidence="2">
    <location>
        <begin position="468"/>
        <end position="490"/>
    </location>
</feature>
<feature type="coiled-coil region" evidence="1">
    <location>
        <begin position="146"/>
        <end position="280"/>
    </location>
</feature>
<feature type="coiled-coil region" evidence="1">
    <location>
        <begin position="310"/>
        <end position="407"/>
    </location>
</feature>
<feature type="mutagenesis site" description="In e1511; reduces the fidelity of mitotic chromosome segregation at 25 degrees Celsius." evidence="3">
    <original>P</original>
    <variation>S</variation>
    <location>
        <position position="109"/>
    </location>
</feature>